<dbReference type="EC" id="3.1.11.6" evidence="1"/>
<dbReference type="EMBL" id="CP000388">
    <property type="protein sequence ID" value="ABG41627.1"/>
    <property type="molecule type" value="Genomic_DNA"/>
</dbReference>
<dbReference type="RefSeq" id="WP_011575865.1">
    <property type="nucleotide sequence ID" value="NC_008228.1"/>
</dbReference>
<dbReference type="SMR" id="Q15R61"/>
<dbReference type="STRING" id="342610.Patl_3121"/>
<dbReference type="KEGG" id="pat:Patl_3121"/>
<dbReference type="eggNOG" id="COG1570">
    <property type="taxonomic scope" value="Bacteria"/>
</dbReference>
<dbReference type="HOGENOM" id="CLU_023625_3_1_6"/>
<dbReference type="OrthoDB" id="9802795at2"/>
<dbReference type="Proteomes" id="UP000001981">
    <property type="component" value="Chromosome"/>
</dbReference>
<dbReference type="GO" id="GO:0005737">
    <property type="term" value="C:cytoplasm"/>
    <property type="evidence" value="ECO:0007669"/>
    <property type="project" value="UniProtKB-SubCell"/>
</dbReference>
<dbReference type="GO" id="GO:0009318">
    <property type="term" value="C:exodeoxyribonuclease VII complex"/>
    <property type="evidence" value="ECO:0007669"/>
    <property type="project" value="InterPro"/>
</dbReference>
<dbReference type="GO" id="GO:0008855">
    <property type="term" value="F:exodeoxyribonuclease VII activity"/>
    <property type="evidence" value="ECO:0007669"/>
    <property type="project" value="UniProtKB-UniRule"/>
</dbReference>
<dbReference type="GO" id="GO:0003676">
    <property type="term" value="F:nucleic acid binding"/>
    <property type="evidence" value="ECO:0007669"/>
    <property type="project" value="InterPro"/>
</dbReference>
<dbReference type="GO" id="GO:0006308">
    <property type="term" value="P:DNA catabolic process"/>
    <property type="evidence" value="ECO:0007669"/>
    <property type="project" value="UniProtKB-UniRule"/>
</dbReference>
<dbReference type="CDD" id="cd04489">
    <property type="entry name" value="ExoVII_LU_OBF"/>
    <property type="match status" value="1"/>
</dbReference>
<dbReference type="HAMAP" id="MF_00378">
    <property type="entry name" value="Exonuc_7_L"/>
    <property type="match status" value="1"/>
</dbReference>
<dbReference type="InterPro" id="IPR003753">
    <property type="entry name" value="Exonuc_VII_L"/>
</dbReference>
<dbReference type="InterPro" id="IPR020579">
    <property type="entry name" value="Exonuc_VII_lsu_C"/>
</dbReference>
<dbReference type="InterPro" id="IPR025824">
    <property type="entry name" value="OB-fold_nuc-bd_dom"/>
</dbReference>
<dbReference type="NCBIfam" id="TIGR00237">
    <property type="entry name" value="xseA"/>
    <property type="match status" value="1"/>
</dbReference>
<dbReference type="PANTHER" id="PTHR30008">
    <property type="entry name" value="EXODEOXYRIBONUCLEASE 7 LARGE SUBUNIT"/>
    <property type="match status" value="1"/>
</dbReference>
<dbReference type="PANTHER" id="PTHR30008:SF0">
    <property type="entry name" value="EXODEOXYRIBONUCLEASE 7 LARGE SUBUNIT"/>
    <property type="match status" value="1"/>
</dbReference>
<dbReference type="Pfam" id="PF02601">
    <property type="entry name" value="Exonuc_VII_L"/>
    <property type="match status" value="1"/>
</dbReference>
<dbReference type="Pfam" id="PF13742">
    <property type="entry name" value="tRNA_anti_2"/>
    <property type="match status" value="1"/>
</dbReference>
<protein>
    <recommendedName>
        <fullName evidence="1">Exodeoxyribonuclease 7 large subunit</fullName>
        <ecNumber evidence="1">3.1.11.6</ecNumber>
    </recommendedName>
    <alternativeName>
        <fullName evidence="1">Exodeoxyribonuclease VII large subunit</fullName>
        <shortName evidence="1">Exonuclease VII large subunit</shortName>
    </alternativeName>
</protein>
<proteinExistence type="inferred from homology"/>
<keyword id="KW-0963">Cytoplasm</keyword>
<keyword id="KW-0269">Exonuclease</keyword>
<keyword id="KW-0378">Hydrolase</keyword>
<keyword id="KW-0540">Nuclease</keyword>
<gene>
    <name evidence="1" type="primary">xseA</name>
    <name type="ordered locus">Patl_3121</name>
</gene>
<sequence length="444" mass="49647">MFSASPANRNIFTVSKLNHLARSVLESEIGQVWLSAEISNFVAASSGHWYFTLKDNRAQIKSAMFKGANRKVMTRPKEGDKVLVQANLSIYEPRGDYQLIVEHLEPEGEGQLKRQFEALKLALSAQGLFANENKQPLPDSISRIGVVTSATGAALHDILTVLKRRNPAVEVIIYPTQVQGANASRQICRSIEIANQRNEVDILIVGRGGGSLEDLWCFNEENVAWAIHYSVLPIVSAVGHEVDITIADFVADLRAPTPSAAAELVSQSQIEMLSALTAKRDRLYKNTRTLLKELHYQQQSLTQELNTYHPKNQLRQHMQRVDNQLTAITHNMTTRLMRAKQTCDSRISKLSQLSPKALLKEQQNTHNLLSQRLTQAWRRGVEQRHLKLANASHLLDTVSPLSTLARGYSITFKNDKVVKSQKDLAKGDVITNRFADGETKSTVN</sequence>
<name>EX7L_PSEA6</name>
<evidence type="ECO:0000255" key="1">
    <source>
        <dbReference type="HAMAP-Rule" id="MF_00378"/>
    </source>
</evidence>
<accession>Q15R61</accession>
<comment type="function">
    <text evidence="1">Bidirectionally degrades single-stranded DNA into large acid-insoluble oligonucleotides, which are then degraded further into small acid-soluble oligonucleotides.</text>
</comment>
<comment type="catalytic activity">
    <reaction evidence="1">
        <text>Exonucleolytic cleavage in either 5'- to 3'- or 3'- to 5'-direction to yield nucleoside 5'-phosphates.</text>
        <dbReference type="EC" id="3.1.11.6"/>
    </reaction>
</comment>
<comment type="subunit">
    <text evidence="1">Heterooligomer composed of large and small subunits.</text>
</comment>
<comment type="subcellular location">
    <subcellularLocation>
        <location evidence="1">Cytoplasm</location>
    </subcellularLocation>
</comment>
<comment type="similarity">
    <text evidence="1">Belongs to the XseA family.</text>
</comment>
<feature type="chain" id="PRO_0000273674" description="Exodeoxyribonuclease 7 large subunit">
    <location>
        <begin position="1"/>
        <end position="444"/>
    </location>
</feature>
<reference key="1">
    <citation type="submission" date="2006-06" db="EMBL/GenBank/DDBJ databases">
        <title>Complete sequence of Pseudoalteromonas atlantica T6c.</title>
        <authorList>
            <consortium name="US DOE Joint Genome Institute"/>
            <person name="Copeland A."/>
            <person name="Lucas S."/>
            <person name="Lapidus A."/>
            <person name="Barry K."/>
            <person name="Detter J.C."/>
            <person name="Glavina del Rio T."/>
            <person name="Hammon N."/>
            <person name="Israni S."/>
            <person name="Dalin E."/>
            <person name="Tice H."/>
            <person name="Pitluck S."/>
            <person name="Saunders E."/>
            <person name="Brettin T."/>
            <person name="Bruce D."/>
            <person name="Han C."/>
            <person name="Tapia R."/>
            <person name="Gilna P."/>
            <person name="Schmutz J."/>
            <person name="Larimer F."/>
            <person name="Land M."/>
            <person name="Hauser L."/>
            <person name="Kyrpides N."/>
            <person name="Kim E."/>
            <person name="Karls A.C."/>
            <person name="Bartlett D."/>
            <person name="Higgins B.P."/>
            <person name="Richardson P."/>
        </authorList>
    </citation>
    <scope>NUCLEOTIDE SEQUENCE [LARGE SCALE GENOMIC DNA]</scope>
    <source>
        <strain>T6c / ATCC BAA-1087</strain>
    </source>
</reference>
<organism>
    <name type="scientific">Pseudoalteromonas atlantica (strain T6c / ATCC BAA-1087)</name>
    <dbReference type="NCBI Taxonomy" id="3042615"/>
    <lineage>
        <taxon>Bacteria</taxon>
        <taxon>Pseudomonadati</taxon>
        <taxon>Pseudomonadota</taxon>
        <taxon>Gammaproteobacteria</taxon>
        <taxon>Alteromonadales</taxon>
        <taxon>Alteromonadaceae</taxon>
        <taxon>Paraglaciecola</taxon>
    </lineage>
</organism>